<name>Y453_YERE8</name>
<gene>
    <name type="ordered locus">YE0453</name>
</gene>
<protein>
    <recommendedName>
        <fullName evidence="1">UPF0213 protein YE0453</fullName>
    </recommendedName>
</protein>
<reference key="1">
    <citation type="journal article" date="2006" name="PLoS Genet.">
        <title>The complete genome sequence and comparative genome analysis of the high pathogenicity Yersinia enterocolitica strain 8081.</title>
        <authorList>
            <person name="Thomson N.R."/>
            <person name="Howard S."/>
            <person name="Wren B.W."/>
            <person name="Holden M.T.G."/>
            <person name="Crossman L."/>
            <person name="Challis G.L."/>
            <person name="Churcher C."/>
            <person name="Mungall K."/>
            <person name="Brooks K."/>
            <person name="Chillingworth T."/>
            <person name="Feltwell T."/>
            <person name="Abdellah Z."/>
            <person name="Hauser H."/>
            <person name="Jagels K."/>
            <person name="Maddison M."/>
            <person name="Moule S."/>
            <person name="Sanders M."/>
            <person name="Whitehead S."/>
            <person name="Quail M.A."/>
            <person name="Dougan G."/>
            <person name="Parkhill J."/>
            <person name="Prentice M.B."/>
        </authorList>
    </citation>
    <scope>NUCLEOTIDE SEQUENCE [LARGE SCALE GENOMIC DNA]</scope>
    <source>
        <strain>NCTC 13174 / 8081</strain>
    </source>
</reference>
<organism>
    <name type="scientific">Yersinia enterocolitica serotype O:8 / biotype 1B (strain NCTC 13174 / 8081)</name>
    <dbReference type="NCBI Taxonomy" id="393305"/>
    <lineage>
        <taxon>Bacteria</taxon>
        <taxon>Pseudomonadati</taxon>
        <taxon>Pseudomonadota</taxon>
        <taxon>Gammaproteobacteria</taxon>
        <taxon>Enterobacterales</taxon>
        <taxon>Yersiniaceae</taxon>
        <taxon>Yersinia</taxon>
    </lineage>
</organism>
<proteinExistence type="inferred from homology"/>
<accession>A1JIY7</accession>
<sequence>MSDSLWHLYLLRTTSGMLYTGITTDVARRLTQHQAGKGAKALRGKGELALVFHCEAGDRSTALKLEYRVKQLSKQQKEKLVMNQPSSLVSLLDVRTD</sequence>
<feature type="chain" id="PRO_0000328918" description="UPF0213 protein YE0453">
    <location>
        <begin position="1"/>
        <end position="97"/>
    </location>
</feature>
<feature type="domain" description="GIY-YIG" evidence="1">
    <location>
        <begin position="4"/>
        <end position="79"/>
    </location>
</feature>
<dbReference type="EMBL" id="AM286415">
    <property type="protein sequence ID" value="CAL10578.1"/>
    <property type="molecule type" value="Genomic_DNA"/>
</dbReference>
<dbReference type="RefSeq" id="WP_005156248.1">
    <property type="nucleotide sequence ID" value="NC_008800.1"/>
</dbReference>
<dbReference type="RefSeq" id="YP_001004822.1">
    <property type="nucleotide sequence ID" value="NC_008800.1"/>
</dbReference>
<dbReference type="SMR" id="A1JIY7"/>
<dbReference type="KEGG" id="yen:YE0453"/>
<dbReference type="PATRIC" id="fig|393305.7.peg.548"/>
<dbReference type="eggNOG" id="COG2827">
    <property type="taxonomic scope" value="Bacteria"/>
</dbReference>
<dbReference type="HOGENOM" id="CLU_135650_0_0_6"/>
<dbReference type="OrthoDB" id="9797095at2"/>
<dbReference type="Proteomes" id="UP000000642">
    <property type="component" value="Chromosome"/>
</dbReference>
<dbReference type="CDD" id="cd10456">
    <property type="entry name" value="GIY-YIG_UPF0213"/>
    <property type="match status" value="1"/>
</dbReference>
<dbReference type="Gene3D" id="3.40.1440.10">
    <property type="entry name" value="GIY-YIG endonuclease"/>
    <property type="match status" value="1"/>
</dbReference>
<dbReference type="HAMAP" id="MF_01029">
    <property type="entry name" value="UPF0213"/>
    <property type="match status" value="1"/>
</dbReference>
<dbReference type="InterPro" id="IPR000305">
    <property type="entry name" value="GIY-YIG_endonuc"/>
</dbReference>
<dbReference type="InterPro" id="IPR035901">
    <property type="entry name" value="GIY-YIG_endonuc_sf"/>
</dbReference>
<dbReference type="InterPro" id="IPR050190">
    <property type="entry name" value="UPF0213_domain"/>
</dbReference>
<dbReference type="InterPro" id="IPR022992">
    <property type="entry name" value="UPF0213_GIY-YIG_endonuc"/>
</dbReference>
<dbReference type="PANTHER" id="PTHR34477">
    <property type="entry name" value="UPF0213 PROTEIN YHBQ"/>
    <property type="match status" value="1"/>
</dbReference>
<dbReference type="PANTHER" id="PTHR34477:SF1">
    <property type="entry name" value="UPF0213 PROTEIN YHBQ"/>
    <property type="match status" value="1"/>
</dbReference>
<dbReference type="Pfam" id="PF01541">
    <property type="entry name" value="GIY-YIG"/>
    <property type="match status" value="1"/>
</dbReference>
<dbReference type="SUPFAM" id="SSF82771">
    <property type="entry name" value="GIY-YIG endonuclease"/>
    <property type="match status" value="1"/>
</dbReference>
<dbReference type="PROSITE" id="PS50164">
    <property type="entry name" value="GIY_YIG"/>
    <property type="match status" value="1"/>
</dbReference>
<comment type="similarity">
    <text evidence="1">Belongs to the UPF0213 family.</text>
</comment>
<evidence type="ECO:0000255" key="1">
    <source>
        <dbReference type="HAMAP-Rule" id="MF_01029"/>
    </source>
</evidence>